<sequence>MATLFIADLHLQTEEPAIVAGFLRFLAVEARQADALYILGDLFEAWIGDDDPNPLHREMAVAIKSLVDSGVPCFFIHGNRDFLIGKRFARESGMILLPQEKVLDLYGRNVLIMHGDTLCTDDAGYQAFRAKVHNPWVQRLFLTLPLFIRRRIAARMRAGSKAANSSKSLDIMDVNAQTVVAEMEKHRVQWLIHGHTHRPAVHELSANDQPAFRVVLGAWHHEGSMVKVTPDNVELIAFPL</sequence>
<keyword id="KW-0997">Cell inner membrane</keyword>
<keyword id="KW-1003">Cell membrane</keyword>
<keyword id="KW-0378">Hydrolase</keyword>
<keyword id="KW-0441">Lipid A biosynthesis</keyword>
<keyword id="KW-0444">Lipid biosynthesis</keyword>
<keyword id="KW-0443">Lipid metabolism</keyword>
<keyword id="KW-0464">Manganese</keyword>
<keyword id="KW-0472">Membrane</keyword>
<keyword id="KW-0479">Metal-binding</keyword>
<accession>B4SXP0</accession>
<evidence type="ECO:0000255" key="1">
    <source>
        <dbReference type="HAMAP-Rule" id="MF_00575"/>
    </source>
</evidence>
<feature type="chain" id="PRO_1000129535" description="UDP-2,3-diacylglucosamine hydrolase">
    <location>
        <begin position="1"/>
        <end position="240"/>
    </location>
</feature>
<feature type="binding site" evidence="1">
    <location>
        <position position="8"/>
    </location>
    <ligand>
        <name>Mn(2+)</name>
        <dbReference type="ChEBI" id="CHEBI:29035"/>
        <label>1</label>
    </ligand>
</feature>
<feature type="binding site" evidence="1">
    <location>
        <position position="10"/>
    </location>
    <ligand>
        <name>Mn(2+)</name>
        <dbReference type="ChEBI" id="CHEBI:29035"/>
        <label>1</label>
    </ligand>
</feature>
<feature type="binding site" evidence="1">
    <location>
        <position position="41"/>
    </location>
    <ligand>
        <name>Mn(2+)</name>
        <dbReference type="ChEBI" id="CHEBI:29035"/>
        <label>1</label>
    </ligand>
</feature>
<feature type="binding site" evidence="1">
    <location>
        <position position="41"/>
    </location>
    <ligand>
        <name>Mn(2+)</name>
        <dbReference type="ChEBI" id="CHEBI:29035"/>
        <label>2</label>
    </ligand>
</feature>
<feature type="binding site" evidence="1">
    <location>
        <begin position="79"/>
        <end position="80"/>
    </location>
    <ligand>
        <name>substrate</name>
    </ligand>
</feature>
<feature type="binding site" evidence="1">
    <location>
        <position position="79"/>
    </location>
    <ligand>
        <name>Mn(2+)</name>
        <dbReference type="ChEBI" id="CHEBI:29035"/>
        <label>2</label>
    </ligand>
</feature>
<feature type="binding site" evidence="1">
    <location>
        <position position="114"/>
    </location>
    <ligand>
        <name>Mn(2+)</name>
        <dbReference type="ChEBI" id="CHEBI:29035"/>
        <label>2</label>
    </ligand>
</feature>
<feature type="binding site" evidence="1">
    <location>
        <position position="122"/>
    </location>
    <ligand>
        <name>substrate</name>
    </ligand>
</feature>
<feature type="binding site" evidence="1">
    <location>
        <position position="160"/>
    </location>
    <ligand>
        <name>substrate</name>
    </ligand>
</feature>
<feature type="binding site" evidence="1">
    <location>
        <position position="164"/>
    </location>
    <ligand>
        <name>substrate</name>
    </ligand>
</feature>
<feature type="binding site" evidence="1">
    <location>
        <position position="167"/>
    </location>
    <ligand>
        <name>substrate</name>
    </ligand>
</feature>
<feature type="binding site" evidence="1">
    <location>
        <position position="195"/>
    </location>
    <ligand>
        <name>Mn(2+)</name>
        <dbReference type="ChEBI" id="CHEBI:29035"/>
        <label>2</label>
    </ligand>
</feature>
<feature type="binding site" evidence="1">
    <location>
        <position position="195"/>
    </location>
    <ligand>
        <name>substrate</name>
    </ligand>
</feature>
<feature type="binding site" evidence="1">
    <location>
        <position position="197"/>
    </location>
    <ligand>
        <name>Mn(2+)</name>
        <dbReference type="ChEBI" id="CHEBI:29035"/>
        <label>1</label>
    </ligand>
</feature>
<organism>
    <name type="scientific">Salmonella newport (strain SL254)</name>
    <dbReference type="NCBI Taxonomy" id="423368"/>
    <lineage>
        <taxon>Bacteria</taxon>
        <taxon>Pseudomonadati</taxon>
        <taxon>Pseudomonadota</taxon>
        <taxon>Gammaproteobacteria</taxon>
        <taxon>Enterobacterales</taxon>
        <taxon>Enterobacteriaceae</taxon>
        <taxon>Salmonella</taxon>
    </lineage>
</organism>
<gene>
    <name evidence="1" type="primary">lpxH</name>
    <name type="ordered locus">SNSL254_A0588</name>
</gene>
<proteinExistence type="inferred from homology"/>
<dbReference type="EC" id="3.6.1.54" evidence="1"/>
<dbReference type="EMBL" id="CP001113">
    <property type="protein sequence ID" value="ACF62590.1"/>
    <property type="molecule type" value="Genomic_DNA"/>
</dbReference>
<dbReference type="RefSeq" id="WP_000212284.1">
    <property type="nucleotide sequence ID" value="NZ_CCMR01000003.1"/>
</dbReference>
<dbReference type="SMR" id="B4SXP0"/>
<dbReference type="KEGG" id="see:SNSL254_A0588"/>
<dbReference type="HOGENOM" id="CLU_074586_0_0_6"/>
<dbReference type="UniPathway" id="UPA00359">
    <property type="reaction ID" value="UER00480"/>
</dbReference>
<dbReference type="Proteomes" id="UP000008824">
    <property type="component" value="Chromosome"/>
</dbReference>
<dbReference type="GO" id="GO:0005737">
    <property type="term" value="C:cytoplasm"/>
    <property type="evidence" value="ECO:0007669"/>
    <property type="project" value="InterPro"/>
</dbReference>
<dbReference type="GO" id="GO:0019897">
    <property type="term" value="C:extrinsic component of plasma membrane"/>
    <property type="evidence" value="ECO:0007669"/>
    <property type="project" value="UniProtKB-UniRule"/>
</dbReference>
<dbReference type="GO" id="GO:0030145">
    <property type="term" value="F:manganese ion binding"/>
    <property type="evidence" value="ECO:0007669"/>
    <property type="project" value="UniProtKB-UniRule"/>
</dbReference>
<dbReference type="GO" id="GO:0008758">
    <property type="term" value="F:UDP-2,3-diacylglucosamine hydrolase activity"/>
    <property type="evidence" value="ECO:0007669"/>
    <property type="project" value="UniProtKB-UniRule"/>
</dbReference>
<dbReference type="GO" id="GO:0009245">
    <property type="term" value="P:lipid A biosynthetic process"/>
    <property type="evidence" value="ECO:0007669"/>
    <property type="project" value="UniProtKB-UniRule"/>
</dbReference>
<dbReference type="CDD" id="cd07398">
    <property type="entry name" value="MPP_YbbF-LpxH"/>
    <property type="match status" value="1"/>
</dbReference>
<dbReference type="FunFam" id="3.60.21.10:FF:000012">
    <property type="entry name" value="UDP-2,3-diacylglucosamine hydrolase"/>
    <property type="match status" value="1"/>
</dbReference>
<dbReference type="Gene3D" id="3.60.21.10">
    <property type="match status" value="1"/>
</dbReference>
<dbReference type="HAMAP" id="MF_00575">
    <property type="entry name" value="LpxH"/>
    <property type="match status" value="1"/>
</dbReference>
<dbReference type="InterPro" id="IPR004843">
    <property type="entry name" value="Calcineurin-like_PHP_ApaH"/>
</dbReference>
<dbReference type="InterPro" id="IPR043461">
    <property type="entry name" value="LpxH-like"/>
</dbReference>
<dbReference type="InterPro" id="IPR029052">
    <property type="entry name" value="Metallo-depent_PP-like"/>
</dbReference>
<dbReference type="InterPro" id="IPR010138">
    <property type="entry name" value="UDP-diacylglucosamine_Hdrlase"/>
</dbReference>
<dbReference type="NCBIfam" id="TIGR01854">
    <property type="entry name" value="lipid_A_lpxH"/>
    <property type="match status" value="1"/>
</dbReference>
<dbReference type="NCBIfam" id="NF003743">
    <property type="entry name" value="PRK05340.1"/>
    <property type="match status" value="1"/>
</dbReference>
<dbReference type="PANTHER" id="PTHR34990:SF1">
    <property type="entry name" value="UDP-2,3-DIACYLGLUCOSAMINE HYDROLASE"/>
    <property type="match status" value="1"/>
</dbReference>
<dbReference type="PANTHER" id="PTHR34990">
    <property type="entry name" value="UDP-2,3-DIACYLGLUCOSAMINE HYDROLASE-RELATED"/>
    <property type="match status" value="1"/>
</dbReference>
<dbReference type="Pfam" id="PF00149">
    <property type="entry name" value="Metallophos"/>
    <property type="match status" value="1"/>
</dbReference>
<dbReference type="SUPFAM" id="SSF56300">
    <property type="entry name" value="Metallo-dependent phosphatases"/>
    <property type="match status" value="1"/>
</dbReference>
<comment type="function">
    <text evidence="1">Hydrolyzes the pyrophosphate bond of UDP-2,3-diacylglucosamine to yield 2,3-diacylglucosamine 1-phosphate (lipid X) and UMP by catalyzing the attack of water at the alpha-P atom. Involved in the biosynthesis of lipid A, a phosphorylated glycolipid that anchors the lipopolysaccharide to the outer membrane of the cell.</text>
</comment>
<comment type="catalytic activity">
    <reaction evidence="1">
        <text>UDP-2-N,3-O-bis[(3R)-3-hydroxytetradecanoyl]-alpha-D-glucosamine + H2O = 2-N,3-O-bis[(3R)-3-hydroxytetradecanoyl]-alpha-D-glucosaminyl 1-phosphate + UMP + 2 H(+)</text>
        <dbReference type="Rhea" id="RHEA:25213"/>
        <dbReference type="ChEBI" id="CHEBI:15377"/>
        <dbReference type="ChEBI" id="CHEBI:15378"/>
        <dbReference type="ChEBI" id="CHEBI:57865"/>
        <dbReference type="ChEBI" id="CHEBI:57957"/>
        <dbReference type="ChEBI" id="CHEBI:78847"/>
        <dbReference type="EC" id="3.6.1.54"/>
    </reaction>
</comment>
<comment type="cofactor">
    <cofactor evidence="1">
        <name>Mn(2+)</name>
        <dbReference type="ChEBI" id="CHEBI:29035"/>
    </cofactor>
    <text evidence="1">Binds 2 Mn(2+) ions per subunit in a binuclear metal center.</text>
</comment>
<comment type="pathway">
    <text evidence="1">Glycolipid biosynthesis; lipid IV(A) biosynthesis; lipid IV(A) from (3R)-3-hydroxytetradecanoyl-[acyl-carrier-protein] and UDP-N-acetyl-alpha-D-glucosamine: step 4/6.</text>
</comment>
<comment type="subcellular location">
    <subcellularLocation>
        <location evidence="1">Cell inner membrane</location>
        <topology evidence="1">Peripheral membrane protein</topology>
        <orientation evidence="1">Cytoplasmic side</orientation>
    </subcellularLocation>
</comment>
<comment type="similarity">
    <text evidence="1">Belongs to the LpxH family.</text>
</comment>
<protein>
    <recommendedName>
        <fullName evidence="1">UDP-2,3-diacylglucosamine hydrolase</fullName>
        <ecNumber evidence="1">3.6.1.54</ecNumber>
    </recommendedName>
    <alternativeName>
        <fullName evidence="1">UDP-2,3-diacylglucosamine diphosphatase</fullName>
    </alternativeName>
</protein>
<name>LPXH_SALNS</name>
<reference key="1">
    <citation type="journal article" date="2011" name="J. Bacteriol.">
        <title>Comparative genomics of 28 Salmonella enterica isolates: evidence for CRISPR-mediated adaptive sublineage evolution.</title>
        <authorList>
            <person name="Fricke W.F."/>
            <person name="Mammel M.K."/>
            <person name="McDermott P.F."/>
            <person name="Tartera C."/>
            <person name="White D.G."/>
            <person name="Leclerc J.E."/>
            <person name="Ravel J."/>
            <person name="Cebula T.A."/>
        </authorList>
    </citation>
    <scope>NUCLEOTIDE SEQUENCE [LARGE SCALE GENOMIC DNA]</scope>
    <source>
        <strain>SL254</strain>
    </source>
</reference>